<name>SYY_XANOM</name>
<keyword id="KW-0030">Aminoacyl-tRNA synthetase</keyword>
<keyword id="KW-0067">ATP-binding</keyword>
<keyword id="KW-0963">Cytoplasm</keyword>
<keyword id="KW-0436">Ligase</keyword>
<keyword id="KW-0547">Nucleotide-binding</keyword>
<keyword id="KW-0648">Protein biosynthesis</keyword>
<keyword id="KW-0694">RNA-binding</keyword>
<proteinExistence type="inferred from homology"/>
<comment type="function">
    <text evidence="1">Catalyzes the attachment of tyrosine to tRNA(Tyr) in a two-step reaction: tyrosine is first activated by ATP to form Tyr-AMP and then transferred to the acceptor end of tRNA(Tyr).</text>
</comment>
<comment type="catalytic activity">
    <reaction evidence="1">
        <text>tRNA(Tyr) + L-tyrosine + ATP = L-tyrosyl-tRNA(Tyr) + AMP + diphosphate + H(+)</text>
        <dbReference type="Rhea" id="RHEA:10220"/>
        <dbReference type="Rhea" id="RHEA-COMP:9706"/>
        <dbReference type="Rhea" id="RHEA-COMP:9707"/>
        <dbReference type="ChEBI" id="CHEBI:15378"/>
        <dbReference type="ChEBI" id="CHEBI:30616"/>
        <dbReference type="ChEBI" id="CHEBI:33019"/>
        <dbReference type="ChEBI" id="CHEBI:58315"/>
        <dbReference type="ChEBI" id="CHEBI:78442"/>
        <dbReference type="ChEBI" id="CHEBI:78536"/>
        <dbReference type="ChEBI" id="CHEBI:456215"/>
        <dbReference type="EC" id="6.1.1.1"/>
    </reaction>
</comment>
<comment type="subunit">
    <text evidence="1">Homodimer.</text>
</comment>
<comment type="subcellular location">
    <subcellularLocation>
        <location evidence="1">Cytoplasm</location>
    </subcellularLocation>
</comment>
<comment type="similarity">
    <text evidence="1">Belongs to the class-I aminoacyl-tRNA synthetase family. TyrS type 2 subfamily.</text>
</comment>
<organism>
    <name type="scientific">Xanthomonas oryzae pv. oryzae (strain MAFF 311018)</name>
    <dbReference type="NCBI Taxonomy" id="342109"/>
    <lineage>
        <taxon>Bacteria</taxon>
        <taxon>Pseudomonadati</taxon>
        <taxon>Pseudomonadota</taxon>
        <taxon>Gammaproteobacteria</taxon>
        <taxon>Lysobacterales</taxon>
        <taxon>Lysobacteraceae</taxon>
        <taxon>Xanthomonas</taxon>
    </lineage>
</organism>
<accession>Q2P892</accession>
<feature type="chain" id="PRO_0000236786" description="Tyrosine--tRNA ligase">
    <location>
        <begin position="1"/>
        <end position="403"/>
    </location>
</feature>
<feature type="domain" description="S4 RNA-binding" evidence="1">
    <location>
        <begin position="339"/>
        <end position="400"/>
    </location>
</feature>
<feature type="short sequence motif" description="'HIGH' region">
    <location>
        <begin position="42"/>
        <end position="51"/>
    </location>
</feature>
<feature type="short sequence motif" description="'KMSKS' region">
    <location>
        <begin position="226"/>
        <end position="230"/>
    </location>
</feature>
<feature type="binding site" evidence="1">
    <location>
        <position position="229"/>
    </location>
    <ligand>
        <name>ATP</name>
        <dbReference type="ChEBI" id="CHEBI:30616"/>
    </ligand>
</feature>
<gene>
    <name evidence="1" type="primary">tyrS</name>
    <name type="ordered locus">XOO0480</name>
</gene>
<evidence type="ECO:0000255" key="1">
    <source>
        <dbReference type="HAMAP-Rule" id="MF_02007"/>
    </source>
</evidence>
<reference key="1">
    <citation type="journal article" date="2005" name="Jpn. Agric. Res. Q.">
        <title>Genome sequence of Xanthomonas oryzae pv. oryzae suggests contribution of large numbers of effector genes and insertion sequences to its race diversity.</title>
        <authorList>
            <person name="Ochiai H."/>
            <person name="Inoue Y."/>
            <person name="Takeya M."/>
            <person name="Sasaki A."/>
            <person name="Kaku H."/>
        </authorList>
    </citation>
    <scope>NUCLEOTIDE SEQUENCE [LARGE SCALE GENOMIC DNA]</scope>
    <source>
        <strain>MAFF 311018</strain>
    </source>
</reference>
<sequence>MTTLDESLALIGRGAEEILKLDQLEARLTSGVPLRVKAGFDPTAPDLHLGHTVLLNKMRQFQQLGHQVIFLIGDFTGMIGDPSGKNATRKPLSREDVLANARTYEEQVFKILDRERTEVRFNSEWFGQMSAADMIKLSAQHTVARMLERDDFAKRFGSQQPIAIHEFLYPLVQGYDSVALRADVELGGTDQKFNLLMGRGLQEHYGQAPQIVLTMPLLEGLEGVAKMSKSLGNYIGINEPAIDIVTKTMKIGDELTWRWIDLLSLDISVAEAVRLKEQVTSGELHPREVKLRLARELATRFHDAATAEQAIAGWHAVVTGQGDTSLLPLQEVVVPAEGLRIASLLTAAGLTPSNSEATRKLKERAVKIDGEVLEDATRVFTQGFEGVIQVGKRNFARVSLVIG</sequence>
<protein>
    <recommendedName>
        <fullName evidence="1">Tyrosine--tRNA ligase</fullName>
        <ecNumber evidence="1">6.1.1.1</ecNumber>
    </recommendedName>
    <alternativeName>
        <fullName evidence="1">Tyrosyl-tRNA synthetase</fullName>
        <shortName evidence="1">TyrRS</shortName>
    </alternativeName>
</protein>
<dbReference type="EC" id="6.1.1.1" evidence="1"/>
<dbReference type="EMBL" id="AP008229">
    <property type="protein sequence ID" value="BAE67235.1"/>
    <property type="molecule type" value="Genomic_DNA"/>
</dbReference>
<dbReference type="RefSeq" id="WP_011407458.1">
    <property type="nucleotide sequence ID" value="NC_007705.1"/>
</dbReference>
<dbReference type="SMR" id="Q2P892"/>
<dbReference type="KEGG" id="xom:XOO0480"/>
<dbReference type="HOGENOM" id="CLU_024003_5_0_6"/>
<dbReference type="GO" id="GO:0005829">
    <property type="term" value="C:cytosol"/>
    <property type="evidence" value="ECO:0007669"/>
    <property type="project" value="TreeGrafter"/>
</dbReference>
<dbReference type="GO" id="GO:0005524">
    <property type="term" value="F:ATP binding"/>
    <property type="evidence" value="ECO:0007669"/>
    <property type="project" value="UniProtKB-UniRule"/>
</dbReference>
<dbReference type="GO" id="GO:0003723">
    <property type="term" value="F:RNA binding"/>
    <property type="evidence" value="ECO:0007669"/>
    <property type="project" value="UniProtKB-KW"/>
</dbReference>
<dbReference type="GO" id="GO:0004831">
    <property type="term" value="F:tyrosine-tRNA ligase activity"/>
    <property type="evidence" value="ECO:0007669"/>
    <property type="project" value="UniProtKB-UniRule"/>
</dbReference>
<dbReference type="GO" id="GO:0006437">
    <property type="term" value="P:tyrosyl-tRNA aminoacylation"/>
    <property type="evidence" value="ECO:0007669"/>
    <property type="project" value="UniProtKB-UniRule"/>
</dbReference>
<dbReference type="CDD" id="cd00805">
    <property type="entry name" value="TyrRS_core"/>
    <property type="match status" value="1"/>
</dbReference>
<dbReference type="FunFam" id="3.10.290.10:FF:000022">
    <property type="entry name" value="Tyrosine--tRNA ligase"/>
    <property type="match status" value="1"/>
</dbReference>
<dbReference type="FunFam" id="3.40.50.620:FF:000061">
    <property type="entry name" value="Tyrosine--tRNA ligase"/>
    <property type="match status" value="1"/>
</dbReference>
<dbReference type="Gene3D" id="3.40.50.620">
    <property type="entry name" value="HUPs"/>
    <property type="match status" value="1"/>
</dbReference>
<dbReference type="Gene3D" id="3.10.290.10">
    <property type="entry name" value="RNA-binding S4 domain"/>
    <property type="match status" value="1"/>
</dbReference>
<dbReference type="Gene3D" id="1.10.240.10">
    <property type="entry name" value="Tyrosyl-Transfer RNA Synthetase"/>
    <property type="match status" value="1"/>
</dbReference>
<dbReference type="HAMAP" id="MF_02007">
    <property type="entry name" value="Tyr_tRNA_synth_type2"/>
    <property type="match status" value="1"/>
</dbReference>
<dbReference type="InterPro" id="IPR001412">
    <property type="entry name" value="aa-tRNA-synth_I_CS"/>
</dbReference>
<dbReference type="InterPro" id="IPR002305">
    <property type="entry name" value="aa-tRNA-synth_Ic"/>
</dbReference>
<dbReference type="InterPro" id="IPR014729">
    <property type="entry name" value="Rossmann-like_a/b/a_fold"/>
</dbReference>
<dbReference type="InterPro" id="IPR036986">
    <property type="entry name" value="S4_RNA-bd_sf"/>
</dbReference>
<dbReference type="InterPro" id="IPR002307">
    <property type="entry name" value="Tyr-tRNA-ligase"/>
</dbReference>
<dbReference type="InterPro" id="IPR024088">
    <property type="entry name" value="Tyr-tRNA-ligase_bac-type"/>
</dbReference>
<dbReference type="InterPro" id="IPR024108">
    <property type="entry name" value="Tyr-tRNA-ligase_bac_2"/>
</dbReference>
<dbReference type="NCBIfam" id="TIGR00234">
    <property type="entry name" value="tyrS"/>
    <property type="match status" value="1"/>
</dbReference>
<dbReference type="PANTHER" id="PTHR11766:SF1">
    <property type="entry name" value="TYROSINE--TRNA LIGASE"/>
    <property type="match status" value="1"/>
</dbReference>
<dbReference type="PANTHER" id="PTHR11766">
    <property type="entry name" value="TYROSYL-TRNA SYNTHETASE"/>
    <property type="match status" value="1"/>
</dbReference>
<dbReference type="Pfam" id="PF00579">
    <property type="entry name" value="tRNA-synt_1b"/>
    <property type="match status" value="1"/>
</dbReference>
<dbReference type="PRINTS" id="PR01040">
    <property type="entry name" value="TRNASYNTHTYR"/>
</dbReference>
<dbReference type="SUPFAM" id="SSF55174">
    <property type="entry name" value="Alpha-L RNA-binding motif"/>
    <property type="match status" value="1"/>
</dbReference>
<dbReference type="SUPFAM" id="SSF52374">
    <property type="entry name" value="Nucleotidylyl transferase"/>
    <property type="match status" value="1"/>
</dbReference>
<dbReference type="PROSITE" id="PS00178">
    <property type="entry name" value="AA_TRNA_LIGASE_I"/>
    <property type="match status" value="1"/>
</dbReference>
<dbReference type="PROSITE" id="PS50889">
    <property type="entry name" value="S4"/>
    <property type="match status" value="1"/>
</dbReference>